<gene>
    <name evidence="1" type="primary">gcvPA</name>
    <name type="ordered locus">Sala_1868</name>
</gene>
<proteinExistence type="inferred from homology"/>
<reference key="1">
    <citation type="journal article" date="2009" name="Proc. Natl. Acad. Sci. U.S.A.">
        <title>The genomic basis of trophic strategy in marine bacteria.</title>
        <authorList>
            <person name="Lauro F.M."/>
            <person name="McDougald D."/>
            <person name="Thomas T."/>
            <person name="Williams T.J."/>
            <person name="Egan S."/>
            <person name="Rice S."/>
            <person name="DeMaere M.Z."/>
            <person name="Ting L."/>
            <person name="Ertan H."/>
            <person name="Johnson J."/>
            <person name="Ferriera S."/>
            <person name="Lapidus A."/>
            <person name="Anderson I."/>
            <person name="Kyrpides N."/>
            <person name="Munk A.C."/>
            <person name="Detter C."/>
            <person name="Han C.S."/>
            <person name="Brown M.V."/>
            <person name="Robb F.T."/>
            <person name="Kjelleberg S."/>
            <person name="Cavicchioli R."/>
        </authorList>
    </citation>
    <scope>NUCLEOTIDE SEQUENCE [LARGE SCALE GENOMIC DNA]</scope>
    <source>
        <strain>DSM 13593 / LMG 18877 / RB2256</strain>
    </source>
</reference>
<organism>
    <name type="scientific">Sphingopyxis alaskensis (strain DSM 13593 / LMG 18877 / RB2256)</name>
    <name type="common">Sphingomonas alaskensis</name>
    <dbReference type="NCBI Taxonomy" id="317655"/>
    <lineage>
        <taxon>Bacteria</taxon>
        <taxon>Pseudomonadati</taxon>
        <taxon>Pseudomonadota</taxon>
        <taxon>Alphaproteobacteria</taxon>
        <taxon>Sphingomonadales</taxon>
        <taxon>Sphingomonadaceae</taxon>
        <taxon>Sphingopyxis</taxon>
    </lineage>
</organism>
<evidence type="ECO:0000255" key="1">
    <source>
        <dbReference type="HAMAP-Rule" id="MF_00712"/>
    </source>
</evidence>
<name>GCSPA_SPHAL</name>
<keyword id="KW-0560">Oxidoreductase</keyword>
<keyword id="KW-1185">Reference proteome</keyword>
<protein>
    <recommendedName>
        <fullName evidence="1">Probable glycine dehydrogenase (decarboxylating) subunit 1</fullName>
        <ecNumber evidence="1">1.4.4.2</ecNumber>
    </recommendedName>
    <alternativeName>
        <fullName evidence="1">Glycine cleavage system P-protein subunit 1</fullName>
    </alternativeName>
    <alternativeName>
        <fullName evidence="1">Glycine decarboxylase subunit 1</fullName>
    </alternativeName>
    <alternativeName>
        <fullName evidence="1">Glycine dehydrogenase (aminomethyl-transferring) subunit 1</fullName>
    </alternativeName>
</protein>
<comment type="function">
    <text evidence="1">The glycine cleavage system catalyzes the degradation of glycine. The P protein binds the alpha-amino group of glycine through its pyridoxal phosphate cofactor; CO(2) is released and the remaining methylamine moiety is then transferred to the lipoamide cofactor of the H protein.</text>
</comment>
<comment type="catalytic activity">
    <reaction evidence="1">
        <text>N(6)-[(R)-lipoyl]-L-lysyl-[glycine-cleavage complex H protein] + glycine + H(+) = N(6)-[(R)-S(8)-aminomethyldihydrolipoyl]-L-lysyl-[glycine-cleavage complex H protein] + CO2</text>
        <dbReference type="Rhea" id="RHEA:24304"/>
        <dbReference type="Rhea" id="RHEA-COMP:10494"/>
        <dbReference type="Rhea" id="RHEA-COMP:10495"/>
        <dbReference type="ChEBI" id="CHEBI:15378"/>
        <dbReference type="ChEBI" id="CHEBI:16526"/>
        <dbReference type="ChEBI" id="CHEBI:57305"/>
        <dbReference type="ChEBI" id="CHEBI:83099"/>
        <dbReference type="ChEBI" id="CHEBI:83143"/>
        <dbReference type="EC" id="1.4.4.2"/>
    </reaction>
</comment>
<comment type="subunit">
    <text evidence="1">The glycine cleavage system is composed of four proteins: P, T, L and H. In this organism, the P 'protein' is a heterodimer of two subunits.</text>
</comment>
<comment type="similarity">
    <text evidence="1">Belongs to the GcvP family. N-terminal subunit subfamily.</text>
</comment>
<accession>Q1GRZ2</accession>
<sequence length="452" mass="48145">MRYLPLTPDDRAAMLGAIGASSIDELFADVPAGARLDGPIAGLPMHASELAVERHMGALARRNRAAGDGPFFLGAGAYRHHVPASVDHLIQRGEFLTAYTPYQPEIAQGTLQMLFEFQSQVARLFGTDVANASMYDGSTACWEAIVMARRITRRSKALLSTGLHPHYRSVARTMAKYTRDVLVDGDPRLEPGTDWAALAGRIDTETSCVVVQYPDILGRIDDMTTLAEACQTAGALLIAVVTEPVALGLIKSPGEMGADIVVGEGQSLGVGLQFGGPYVGLFACKSKYVRQMPGRLCGETVDANGKRGFVLTLSTREQHIRREKATSNICTNSGLCALAFSIHMTLLGEAGLRQLATINHGRAKAAATELAKVPAVSVMNDSFFNEFTLLLPTAARPVVHRLAEQDILGGVSLGRLYPDTAALENGLVVAVTETVTEADIAAFAAALKEVLA</sequence>
<feature type="chain" id="PRO_1000045677" description="Probable glycine dehydrogenase (decarboxylating) subunit 1">
    <location>
        <begin position="1"/>
        <end position="452"/>
    </location>
</feature>
<dbReference type="EC" id="1.4.4.2" evidence="1"/>
<dbReference type="EMBL" id="CP000356">
    <property type="protein sequence ID" value="ABF53580.1"/>
    <property type="molecule type" value="Genomic_DNA"/>
</dbReference>
<dbReference type="RefSeq" id="WP_011542158.1">
    <property type="nucleotide sequence ID" value="NC_008048.1"/>
</dbReference>
<dbReference type="SMR" id="Q1GRZ2"/>
<dbReference type="STRING" id="317655.Sala_1868"/>
<dbReference type="KEGG" id="sal:Sala_1868"/>
<dbReference type="eggNOG" id="COG0403">
    <property type="taxonomic scope" value="Bacteria"/>
</dbReference>
<dbReference type="HOGENOM" id="CLU_004620_0_2_5"/>
<dbReference type="OrthoDB" id="9801272at2"/>
<dbReference type="Proteomes" id="UP000006578">
    <property type="component" value="Chromosome"/>
</dbReference>
<dbReference type="GO" id="GO:0004375">
    <property type="term" value="F:glycine dehydrogenase (decarboxylating) activity"/>
    <property type="evidence" value="ECO:0007669"/>
    <property type="project" value="UniProtKB-EC"/>
</dbReference>
<dbReference type="GO" id="GO:0019464">
    <property type="term" value="P:glycine decarboxylation via glycine cleavage system"/>
    <property type="evidence" value="ECO:0007669"/>
    <property type="project" value="UniProtKB-UniRule"/>
</dbReference>
<dbReference type="GO" id="GO:0009116">
    <property type="term" value="P:nucleoside metabolic process"/>
    <property type="evidence" value="ECO:0007669"/>
    <property type="project" value="InterPro"/>
</dbReference>
<dbReference type="Gene3D" id="3.90.1150.10">
    <property type="entry name" value="Aspartate Aminotransferase, domain 1"/>
    <property type="match status" value="1"/>
</dbReference>
<dbReference type="Gene3D" id="3.40.640.10">
    <property type="entry name" value="Type I PLP-dependent aspartate aminotransferase-like (Major domain)"/>
    <property type="match status" value="1"/>
</dbReference>
<dbReference type="HAMAP" id="MF_00712">
    <property type="entry name" value="GcvPA"/>
    <property type="match status" value="1"/>
</dbReference>
<dbReference type="InterPro" id="IPR023010">
    <property type="entry name" value="GcvPA"/>
</dbReference>
<dbReference type="InterPro" id="IPR049315">
    <property type="entry name" value="GDC-P_N"/>
</dbReference>
<dbReference type="InterPro" id="IPR015424">
    <property type="entry name" value="PyrdxlP-dep_Trfase"/>
</dbReference>
<dbReference type="InterPro" id="IPR015421">
    <property type="entry name" value="PyrdxlP-dep_Trfase_major"/>
</dbReference>
<dbReference type="InterPro" id="IPR015422">
    <property type="entry name" value="PyrdxlP-dep_Trfase_small"/>
</dbReference>
<dbReference type="NCBIfam" id="NF001696">
    <property type="entry name" value="PRK00451.1"/>
    <property type="match status" value="1"/>
</dbReference>
<dbReference type="PANTHER" id="PTHR42806">
    <property type="entry name" value="GLYCINE CLEAVAGE SYSTEM P-PROTEIN"/>
    <property type="match status" value="1"/>
</dbReference>
<dbReference type="PANTHER" id="PTHR42806:SF1">
    <property type="entry name" value="GLYCINE DEHYDROGENASE (DECARBOXYLATING)"/>
    <property type="match status" value="1"/>
</dbReference>
<dbReference type="Pfam" id="PF02347">
    <property type="entry name" value="GDC-P"/>
    <property type="match status" value="1"/>
</dbReference>
<dbReference type="PIRSF" id="PIRSF006815">
    <property type="entry name" value="GcvPA"/>
    <property type="match status" value="1"/>
</dbReference>
<dbReference type="SUPFAM" id="SSF53383">
    <property type="entry name" value="PLP-dependent transferases"/>
    <property type="match status" value="1"/>
</dbReference>